<comment type="catalytic activity">
    <reaction evidence="1">
        <text>(6S)-5,6,7,8-tetrahydrofolate + formate + ATP = (6R)-10-formyltetrahydrofolate + ADP + phosphate</text>
        <dbReference type="Rhea" id="RHEA:20221"/>
        <dbReference type="ChEBI" id="CHEBI:15740"/>
        <dbReference type="ChEBI" id="CHEBI:30616"/>
        <dbReference type="ChEBI" id="CHEBI:43474"/>
        <dbReference type="ChEBI" id="CHEBI:57453"/>
        <dbReference type="ChEBI" id="CHEBI:195366"/>
        <dbReference type="ChEBI" id="CHEBI:456216"/>
        <dbReference type="EC" id="6.3.4.3"/>
    </reaction>
</comment>
<comment type="pathway">
    <text evidence="1">One-carbon metabolism; tetrahydrofolate interconversion.</text>
</comment>
<comment type="similarity">
    <text evidence="1">Belongs to the formate--tetrahydrofolate ligase family.</text>
</comment>
<evidence type="ECO:0000255" key="1">
    <source>
        <dbReference type="HAMAP-Rule" id="MF_01543"/>
    </source>
</evidence>
<dbReference type="EC" id="6.3.4.3" evidence="1"/>
<dbReference type="EMBL" id="CP001098">
    <property type="protein sequence ID" value="ACL68821.1"/>
    <property type="molecule type" value="Genomic_DNA"/>
</dbReference>
<dbReference type="RefSeq" id="WP_012635020.1">
    <property type="nucleotide sequence ID" value="NC_011899.1"/>
</dbReference>
<dbReference type="SMR" id="B8D067"/>
<dbReference type="STRING" id="373903.Hore_00600"/>
<dbReference type="KEGG" id="hor:Hore_00600"/>
<dbReference type="eggNOG" id="COG2759">
    <property type="taxonomic scope" value="Bacteria"/>
</dbReference>
<dbReference type="HOGENOM" id="CLU_003601_3_3_9"/>
<dbReference type="OrthoDB" id="9761733at2"/>
<dbReference type="UniPathway" id="UPA00193"/>
<dbReference type="Proteomes" id="UP000000719">
    <property type="component" value="Chromosome"/>
</dbReference>
<dbReference type="GO" id="GO:0005524">
    <property type="term" value="F:ATP binding"/>
    <property type="evidence" value="ECO:0007669"/>
    <property type="project" value="UniProtKB-UniRule"/>
</dbReference>
<dbReference type="GO" id="GO:0004329">
    <property type="term" value="F:formate-tetrahydrofolate ligase activity"/>
    <property type="evidence" value="ECO:0007669"/>
    <property type="project" value="UniProtKB-UniRule"/>
</dbReference>
<dbReference type="GO" id="GO:0035999">
    <property type="term" value="P:tetrahydrofolate interconversion"/>
    <property type="evidence" value="ECO:0007669"/>
    <property type="project" value="UniProtKB-UniRule"/>
</dbReference>
<dbReference type="CDD" id="cd00477">
    <property type="entry name" value="FTHFS"/>
    <property type="match status" value="1"/>
</dbReference>
<dbReference type="FunFam" id="3.30.1510.10:FF:000001">
    <property type="entry name" value="Formate--tetrahydrofolate ligase"/>
    <property type="match status" value="1"/>
</dbReference>
<dbReference type="FunFam" id="3.10.410.10:FF:000001">
    <property type="entry name" value="Putative formate--tetrahydrofolate ligase"/>
    <property type="match status" value="1"/>
</dbReference>
<dbReference type="Gene3D" id="3.30.1510.10">
    <property type="entry name" value="Domain 2, N(10)-formyltetrahydrofolate synthetase"/>
    <property type="match status" value="1"/>
</dbReference>
<dbReference type="Gene3D" id="3.10.410.10">
    <property type="entry name" value="Formyltetrahydrofolate synthetase, domain 3"/>
    <property type="match status" value="1"/>
</dbReference>
<dbReference type="Gene3D" id="3.40.50.300">
    <property type="entry name" value="P-loop containing nucleotide triphosphate hydrolases"/>
    <property type="match status" value="1"/>
</dbReference>
<dbReference type="HAMAP" id="MF_01543">
    <property type="entry name" value="FTHFS"/>
    <property type="match status" value="1"/>
</dbReference>
<dbReference type="InterPro" id="IPR000559">
    <property type="entry name" value="Formate_THF_ligase"/>
</dbReference>
<dbReference type="InterPro" id="IPR020628">
    <property type="entry name" value="Formate_THF_ligase_CS"/>
</dbReference>
<dbReference type="InterPro" id="IPR027417">
    <property type="entry name" value="P-loop_NTPase"/>
</dbReference>
<dbReference type="NCBIfam" id="NF010030">
    <property type="entry name" value="PRK13505.1"/>
    <property type="match status" value="1"/>
</dbReference>
<dbReference type="Pfam" id="PF01268">
    <property type="entry name" value="FTHFS"/>
    <property type="match status" value="1"/>
</dbReference>
<dbReference type="SUPFAM" id="SSF52540">
    <property type="entry name" value="P-loop containing nucleoside triphosphate hydrolases"/>
    <property type="match status" value="1"/>
</dbReference>
<dbReference type="PROSITE" id="PS00721">
    <property type="entry name" value="FTHFS_1"/>
    <property type="match status" value="1"/>
</dbReference>
<dbReference type="PROSITE" id="PS00722">
    <property type="entry name" value="FTHFS_2"/>
    <property type="match status" value="1"/>
</dbReference>
<reference key="1">
    <citation type="journal article" date="2009" name="PLoS ONE">
        <title>Genome analysis of the anaerobic thermohalophilic bacterium Halothermothrix orenii.</title>
        <authorList>
            <person name="Mavromatis K."/>
            <person name="Ivanova N."/>
            <person name="Anderson I."/>
            <person name="Lykidis A."/>
            <person name="Hooper S.D."/>
            <person name="Sun H."/>
            <person name="Kunin V."/>
            <person name="Lapidus A."/>
            <person name="Hugenholtz P."/>
            <person name="Patel B."/>
            <person name="Kyrpides N.C."/>
        </authorList>
    </citation>
    <scope>NUCLEOTIDE SEQUENCE [LARGE SCALE GENOMIC DNA]</scope>
    <source>
        <strain>H 168 / OCM 544 / DSM 9562</strain>
    </source>
</reference>
<proteinExistence type="inferred from homology"/>
<gene>
    <name evidence="1" type="primary">fhs</name>
    <name type="ordered locus">Hore_00600</name>
</gene>
<accession>B8D067</accession>
<name>FTHS_HALOH</name>
<feature type="chain" id="PRO_1000185255" description="Formate--tetrahydrofolate ligase">
    <location>
        <begin position="1"/>
        <end position="554"/>
    </location>
</feature>
<feature type="binding site" evidence="1">
    <location>
        <begin position="63"/>
        <end position="70"/>
    </location>
    <ligand>
        <name>ATP</name>
        <dbReference type="ChEBI" id="CHEBI:30616"/>
    </ligand>
</feature>
<protein>
    <recommendedName>
        <fullName evidence="1">Formate--tetrahydrofolate ligase</fullName>
        <ecNumber evidence="1">6.3.4.3</ecNumber>
    </recommendedName>
    <alternativeName>
        <fullName evidence="1">Formyltetrahydrofolate synthetase</fullName>
        <shortName evidence="1">FHS</shortName>
        <shortName evidence="1">FTHFS</shortName>
    </alternativeName>
</protein>
<keyword id="KW-0067">ATP-binding</keyword>
<keyword id="KW-0436">Ligase</keyword>
<keyword id="KW-0547">Nucleotide-binding</keyword>
<keyword id="KW-0554">One-carbon metabolism</keyword>
<keyword id="KW-1185">Reference proteome</keyword>
<sequence length="554" mass="59069">MKSDIEIAQDARMEPIEEIAEKAGLHKDQIELYGKYKAKVNTDIIDDDKKDGKLVLVTAITPTPAGEGKTTTTVGLGQALNLLGKKAIIALREPSLGPTMGIKGGAAGGGYSQVLPMEDINLHFTGDIHAIGAAHNLLSAVIDNHIKQGNDLGIDPTSVTWKRVVDMNDRALRNIVVGLGGKAHGVPREDGFMITVASEIMAILCLANNLEDLKNKISNIVVGYTYDGEAITAGDLKVSGAMTALLKDAIKPNLVQTLENTPAFIHGGPFANIAHGCNSIMATKMALKLGEITVTEAGFGADLGAEKFFNIKCRYAGLNPDAAVVVATVRALKMHGGVDKDSLSEENLDALARGFENLEKHLENVSKFGVPSVVAINRFPGDTEAELNLVRDKCEEMGVPVAISEVWARGGEGGLDLARKLVDVLENTPGQFSYLYDVNFPITDKIEKIAKEIYGADGVNYTSKALKQIDKYTELGYDKLPICMAKTQSSISDDPSLKGRPRGFRINVREVNLSAGAGFIIPLTGPVLTMPGLPKKPAAEGIDIDADGKISGLF</sequence>
<organism>
    <name type="scientific">Halothermothrix orenii (strain H 168 / OCM 544 / DSM 9562)</name>
    <dbReference type="NCBI Taxonomy" id="373903"/>
    <lineage>
        <taxon>Bacteria</taxon>
        <taxon>Bacillati</taxon>
        <taxon>Bacillota</taxon>
        <taxon>Clostridia</taxon>
        <taxon>Halanaerobiales</taxon>
        <taxon>Halothermotrichaceae</taxon>
        <taxon>Halothermothrix</taxon>
    </lineage>
</organism>